<reference key="1">
    <citation type="submission" date="2007-03" db="EMBL/GenBank/DDBJ databases">
        <title>Complete sequence of Shewanella loihica PV-4.</title>
        <authorList>
            <consortium name="US DOE Joint Genome Institute"/>
            <person name="Copeland A."/>
            <person name="Lucas S."/>
            <person name="Lapidus A."/>
            <person name="Barry K."/>
            <person name="Detter J.C."/>
            <person name="Glavina del Rio T."/>
            <person name="Hammon N."/>
            <person name="Israni S."/>
            <person name="Dalin E."/>
            <person name="Tice H."/>
            <person name="Pitluck S."/>
            <person name="Chain P."/>
            <person name="Malfatti S."/>
            <person name="Shin M."/>
            <person name="Vergez L."/>
            <person name="Schmutz J."/>
            <person name="Larimer F."/>
            <person name="Land M."/>
            <person name="Hauser L."/>
            <person name="Kyrpides N."/>
            <person name="Mikhailova N."/>
            <person name="Romine M.F."/>
            <person name="Serres G."/>
            <person name="Fredrickson J."/>
            <person name="Tiedje J."/>
            <person name="Richardson P."/>
        </authorList>
    </citation>
    <scope>NUCLEOTIDE SEQUENCE [LARGE SCALE GENOMIC DNA]</scope>
    <source>
        <strain>ATCC BAA-1088 / PV-4</strain>
    </source>
</reference>
<organism>
    <name type="scientific">Shewanella loihica (strain ATCC BAA-1088 / PV-4)</name>
    <dbReference type="NCBI Taxonomy" id="323850"/>
    <lineage>
        <taxon>Bacteria</taxon>
        <taxon>Pseudomonadati</taxon>
        <taxon>Pseudomonadota</taxon>
        <taxon>Gammaproteobacteria</taxon>
        <taxon>Alteromonadales</taxon>
        <taxon>Shewanellaceae</taxon>
        <taxon>Shewanella</taxon>
    </lineage>
</organism>
<proteinExistence type="inferred from homology"/>
<gene>
    <name evidence="1" type="primary">rpmF</name>
    <name type="ordered locus">Shew_1599</name>
</gene>
<comment type="similarity">
    <text evidence="1">Belongs to the bacterial ribosomal protein bL32 family.</text>
</comment>
<sequence length="56" mass="6340">MAVQQNKKSRSKRGMRRSHDALSTAQLSVDATSGELHRRHNVTADGYYRGQKVINK</sequence>
<keyword id="KW-1185">Reference proteome</keyword>
<keyword id="KW-0687">Ribonucleoprotein</keyword>
<keyword id="KW-0689">Ribosomal protein</keyword>
<name>RL32_SHELP</name>
<evidence type="ECO:0000255" key="1">
    <source>
        <dbReference type="HAMAP-Rule" id="MF_00340"/>
    </source>
</evidence>
<evidence type="ECO:0000256" key="2">
    <source>
        <dbReference type="SAM" id="MobiDB-lite"/>
    </source>
</evidence>
<evidence type="ECO:0000305" key="3"/>
<feature type="chain" id="PRO_0000296561" description="Large ribosomal subunit protein bL32">
    <location>
        <begin position="1"/>
        <end position="56"/>
    </location>
</feature>
<feature type="region of interest" description="Disordered" evidence="2">
    <location>
        <begin position="1"/>
        <end position="37"/>
    </location>
</feature>
<feature type="compositionally biased region" description="Basic residues" evidence="2">
    <location>
        <begin position="7"/>
        <end position="16"/>
    </location>
</feature>
<feature type="compositionally biased region" description="Polar residues" evidence="2">
    <location>
        <begin position="21"/>
        <end position="31"/>
    </location>
</feature>
<dbReference type="EMBL" id="CP000606">
    <property type="protein sequence ID" value="ABO23466.1"/>
    <property type="molecule type" value="Genomic_DNA"/>
</dbReference>
<dbReference type="RefSeq" id="WP_011865398.1">
    <property type="nucleotide sequence ID" value="NC_009092.1"/>
</dbReference>
<dbReference type="SMR" id="A3QDB8"/>
<dbReference type="STRING" id="323850.Shew_1599"/>
<dbReference type="KEGG" id="slo:Shew_1599"/>
<dbReference type="eggNOG" id="COG0333">
    <property type="taxonomic scope" value="Bacteria"/>
</dbReference>
<dbReference type="HOGENOM" id="CLU_129084_2_1_6"/>
<dbReference type="OrthoDB" id="9801927at2"/>
<dbReference type="Proteomes" id="UP000001558">
    <property type="component" value="Chromosome"/>
</dbReference>
<dbReference type="GO" id="GO:0015934">
    <property type="term" value="C:large ribosomal subunit"/>
    <property type="evidence" value="ECO:0007669"/>
    <property type="project" value="InterPro"/>
</dbReference>
<dbReference type="GO" id="GO:0003735">
    <property type="term" value="F:structural constituent of ribosome"/>
    <property type="evidence" value="ECO:0007669"/>
    <property type="project" value="InterPro"/>
</dbReference>
<dbReference type="GO" id="GO:0006412">
    <property type="term" value="P:translation"/>
    <property type="evidence" value="ECO:0007669"/>
    <property type="project" value="UniProtKB-UniRule"/>
</dbReference>
<dbReference type="HAMAP" id="MF_00340">
    <property type="entry name" value="Ribosomal_bL32"/>
    <property type="match status" value="1"/>
</dbReference>
<dbReference type="InterPro" id="IPR002677">
    <property type="entry name" value="Ribosomal_bL32"/>
</dbReference>
<dbReference type="InterPro" id="IPR044957">
    <property type="entry name" value="Ribosomal_bL32_bact"/>
</dbReference>
<dbReference type="InterPro" id="IPR011332">
    <property type="entry name" value="Ribosomal_zn-bd"/>
</dbReference>
<dbReference type="NCBIfam" id="TIGR01031">
    <property type="entry name" value="rpmF_bact"/>
    <property type="match status" value="1"/>
</dbReference>
<dbReference type="PANTHER" id="PTHR35534">
    <property type="entry name" value="50S RIBOSOMAL PROTEIN L32"/>
    <property type="match status" value="1"/>
</dbReference>
<dbReference type="PANTHER" id="PTHR35534:SF1">
    <property type="entry name" value="LARGE RIBOSOMAL SUBUNIT PROTEIN BL32"/>
    <property type="match status" value="1"/>
</dbReference>
<dbReference type="Pfam" id="PF01783">
    <property type="entry name" value="Ribosomal_L32p"/>
    <property type="match status" value="1"/>
</dbReference>
<dbReference type="SUPFAM" id="SSF57829">
    <property type="entry name" value="Zn-binding ribosomal proteins"/>
    <property type="match status" value="1"/>
</dbReference>
<protein>
    <recommendedName>
        <fullName evidence="1">Large ribosomal subunit protein bL32</fullName>
    </recommendedName>
    <alternativeName>
        <fullName evidence="3">50S ribosomal protein L32</fullName>
    </alternativeName>
</protein>
<accession>A3QDB8</accession>